<evidence type="ECO:0000250" key="1"/>
<evidence type="ECO:0000255" key="2">
    <source>
        <dbReference type="HAMAP-Rule" id="MF_00047"/>
    </source>
</evidence>
<sequence length="329" mass="36657">MIKNILLLCGGGSSEHEISLLSANFVEQQLNLIENVSVTRVEIKNEGWVTNQGELVYLDPNQKKLCSDNLSLDVDFIVPCIHGFPGETGDIQSMFEIAGIPYLGCGPEASSNSFNKITSKLWYDAIGIPNTPYLFLTRNDEQAHEQALQAFDKWGKVFVKAARQGSSVGCYSVTNKQSVSQAVNDAFGYSEQVLVEKSVKPRELEVAAYEMNGELHITKPGEVIAPDGAFYSYDEKYSTSSHSLTEVEAKNLTEEQVEAIRVASETVFKQMNLRHLSRIDFFLTEDGEIYLNEVNTFPGMTPISMFPKMLQNNGHKFHEFLADCINTAI</sequence>
<proteinExistence type="inferred from homology"/>
<gene>
    <name evidence="2" type="primary">ddl</name>
    <name type="ordered locus">VIBHAR_05785</name>
</gene>
<accession>A7N512</accession>
<reference key="1">
    <citation type="submission" date="2007-08" db="EMBL/GenBank/DDBJ databases">
        <authorList>
            <consortium name="The Vibrio harveyi Genome Sequencing Project"/>
            <person name="Bassler B."/>
            <person name="Clifton S.W."/>
            <person name="Fulton L."/>
            <person name="Delehaunty K."/>
            <person name="Fronick C."/>
            <person name="Harrison M."/>
            <person name="Markivic C."/>
            <person name="Fulton R."/>
            <person name="Tin-Wollam A.-M."/>
            <person name="Shah N."/>
            <person name="Pepin K."/>
            <person name="Nash W."/>
            <person name="Thiruvilangam P."/>
            <person name="Bhonagiri V."/>
            <person name="Waters C."/>
            <person name="Tu K.C."/>
            <person name="Irgon J."/>
            <person name="Wilson R.K."/>
        </authorList>
    </citation>
    <scope>NUCLEOTIDE SEQUENCE [LARGE SCALE GENOMIC DNA]</scope>
    <source>
        <strain>ATCC BAA-1116 / BB120</strain>
    </source>
</reference>
<protein>
    <recommendedName>
        <fullName evidence="2">D-alanine--D-alanine ligase</fullName>
        <ecNumber evidence="2">6.3.2.4</ecNumber>
    </recommendedName>
    <alternativeName>
        <fullName evidence="2">D-Ala-D-Ala ligase</fullName>
    </alternativeName>
    <alternativeName>
        <fullName evidence="2">D-alanylalanine synthetase</fullName>
    </alternativeName>
</protein>
<name>DDL_VIBC1</name>
<comment type="function">
    <text evidence="2">Cell wall formation.</text>
</comment>
<comment type="catalytic activity">
    <reaction evidence="2">
        <text>2 D-alanine + ATP = D-alanyl-D-alanine + ADP + phosphate + H(+)</text>
        <dbReference type="Rhea" id="RHEA:11224"/>
        <dbReference type="ChEBI" id="CHEBI:15378"/>
        <dbReference type="ChEBI" id="CHEBI:30616"/>
        <dbReference type="ChEBI" id="CHEBI:43474"/>
        <dbReference type="ChEBI" id="CHEBI:57416"/>
        <dbReference type="ChEBI" id="CHEBI:57822"/>
        <dbReference type="ChEBI" id="CHEBI:456216"/>
        <dbReference type="EC" id="6.3.2.4"/>
    </reaction>
</comment>
<comment type="cofactor">
    <cofactor evidence="1">
        <name>Mg(2+)</name>
        <dbReference type="ChEBI" id="CHEBI:18420"/>
    </cofactor>
    <cofactor evidence="1">
        <name>Mn(2+)</name>
        <dbReference type="ChEBI" id="CHEBI:29035"/>
    </cofactor>
    <text evidence="1">Binds 2 magnesium or manganese ions per subunit.</text>
</comment>
<comment type="pathway">
    <text evidence="2">Cell wall biogenesis; peptidoglycan biosynthesis.</text>
</comment>
<comment type="subcellular location">
    <subcellularLocation>
        <location evidence="2">Cytoplasm</location>
    </subcellularLocation>
</comment>
<comment type="similarity">
    <text evidence="2">Belongs to the D-alanine--D-alanine ligase family.</text>
</comment>
<dbReference type="EC" id="6.3.2.4" evidence="2"/>
<dbReference type="EMBL" id="CP000790">
    <property type="protein sequence ID" value="ABU73679.1"/>
    <property type="molecule type" value="Genomic_DNA"/>
</dbReference>
<dbReference type="RefSeq" id="WP_012129370.1">
    <property type="nucleotide sequence ID" value="NC_009784.1"/>
</dbReference>
<dbReference type="SMR" id="A7N512"/>
<dbReference type="KEGG" id="vha:VIBHAR_05785"/>
<dbReference type="PATRIC" id="fig|338187.25.peg.4496"/>
<dbReference type="UniPathway" id="UPA00219"/>
<dbReference type="Proteomes" id="UP000008152">
    <property type="component" value="Chromosome II"/>
</dbReference>
<dbReference type="GO" id="GO:0005829">
    <property type="term" value="C:cytosol"/>
    <property type="evidence" value="ECO:0007669"/>
    <property type="project" value="TreeGrafter"/>
</dbReference>
<dbReference type="GO" id="GO:0005524">
    <property type="term" value="F:ATP binding"/>
    <property type="evidence" value="ECO:0007669"/>
    <property type="project" value="UniProtKB-KW"/>
</dbReference>
<dbReference type="GO" id="GO:0008716">
    <property type="term" value="F:D-alanine-D-alanine ligase activity"/>
    <property type="evidence" value="ECO:0007669"/>
    <property type="project" value="UniProtKB-UniRule"/>
</dbReference>
<dbReference type="GO" id="GO:0046872">
    <property type="term" value="F:metal ion binding"/>
    <property type="evidence" value="ECO:0007669"/>
    <property type="project" value="UniProtKB-KW"/>
</dbReference>
<dbReference type="GO" id="GO:0071555">
    <property type="term" value="P:cell wall organization"/>
    <property type="evidence" value="ECO:0007669"/>
    <property type="project" value="UniProtKB-KW"/>
</dbReference>
<dbReference type="GO" id="GO:0009252">
    <property type="term" value="P:peptidoglycan biosynthetic process"/>
    <property type="evidence" value="ECO:0007669"/>
    <property type="project" value="UniProtKB-UniRule"/>
</dbReference>
<dbReference type="GO" id="GO:0008360">
    <property type="term" value="P:regulation of cell shape"/>
    <property type="evidence" value="ECO:0007669"/>
    <property type="project" value="UniProtKB-KW"/>
</dbReference>
<dbReference type="Gene3D" id="3.40.50.20">
    <property type="match status" value="1"/>
</dbReference>
<dbReference type="Gene3D" id="3.30.1490.20">
    <property type="entry name" value="ATP-grasp fold, A domain"/>
    <property type="match status" value="1"/>
</dbReference>
<dbReference type="Gene3D" id="3.30.470.20">
    <property type="entry name" value="ATP-grasp fold, B domain"/>
    <property type="match status" value="1"/>
</dbReference>
<dbReference type="HAMAP" id="MF_00047">
    <property type="entry name" value="Dala_Dala_lig"/>
    <property type="match status" value="1"/>
</dbReference>
<dbReference type="InterPro" id="IPR011761">
    <property type="entry name" value="ATP-grasp"/>
</dbReference>
<dbReference type="InterPro" id="IPR013815">
    <property type="entry name" value="ATP_grasp_subdomain_1"/>
</dbReference>
<dbReference type="InterPro" id="IPR000291">
    <property type="entry name" value="D-Ala_lig_Van_CS"/>
</dbReference>
<dbReference type="InterPro" id="IPR005905">
    <property type="entry name" value="D_ala_D_ala"/>
</dbReference>
<dbReference type="InterPro" id="IPR011095">
    <property type="entry name" value="Dala_Dala_lig_C"/>
</dbReference>
<dbReference type="InterPro" id="IPR011127">
    <property type="entry name" value="Dala_Dala_lig_N"/>
</dbReference>
<dbReference type="InterPro" id="IPR016185">
    <property type="entry name" value="PreATP-grasp_dom_sf"/>
</dbReference>
<dbReference type="NCBIfam" id="TIGR01205">
    <property type="entry name" value="D_ala_D_alaTIGR"/>
    <property type="match status" value="1"/>
</dbReference>
<dbReference type="NCBIfam" id="NF002527">
    <property type="entry name" value="PRK01966.1-3"/>
    <property type="match status" value="1"/>
</dbReference>
<dbReference type="NCBIfam" id="NF002528">
    <property type="entry name" value="PRK01966.1-4"/>
    <property type="match status" value="1"/>
</dbReference>
<dbReference type="PANTHER" id="PTHR23132">
    <property type="entry name" value="D-ALANINE--D-ALANINE LIGASE"/>
    <property type="match status" value="1"/>
</dbReference>
<dbReference type="PANTHER" id="PTHR23132:SF25">
    <property type="entry name" value="D-ALANINE--D-ALANINE LIGASE A"/>
    <property type="match status" value="1"/>
</dbReference>
<dbReference type="Pfam" id="PF07478">
    <property type="entry name" value="Dala_Dala_lig_C"/>
    <property type="match status" value="1"/>
</dbReference>
<dbReference type="Pfam" id="PF01820">
    <property type="entry name" value="Dala_Dala_lig_N"/>
    <property type="match status" value="1"/>
</dbReference>
<dbReference type="PIRSF" id="PIRSF039102">
    <property type="entry name" value="Ddl/VanB"/>
    <property type="match status" value="1"/>
</dbReference>
<dbReference type="SUPFAM" id="SSF56059">
    <property type="entry name" value="Glutathione synthetase ATP-binding domain-like"/>
    <property type="match status" value="1"/>
</dbReference>
<dbReference type="SUPFAM" id="SSF52440">
    <property type="entry name" value="PreATP-grasp domain"/>
    <property type="match status" value="1"/>
</dbReference>
<dbReference type="PROSITE" id="PS50975">
    <property type="entry name" value="ATP_GRASP"/>
    <property type="match status" value="1"/>
</dbReference>
<dbReference type="PROSITE" id="PS00843">
    <property type="entry name" value="DALA_DALA_LIGASE_1"/>
    <property type="match status" value="1"/>
</dbReference>
<dbReference type="PROSITE" id="PS00844">
    <property type="entry name" value="DALA_DALA_LIGASE_2"/>
    <property type="match status" value="1"/>
</dbReference>
<feature type="chain" id="PRO_1000030519" description="D-alanine--D-alanine ligase">
    <location>
        <begin position="1"/>
        <end position="329"/>
    </location>
</feature>
<feature type="domain" description="ATP-grasp" evidence="2">
    <location>
        <begin position="120"/>
        <end position="326"/>
    </location>
</feature>
<feature type="binding site" evidence="2">
    <location>
        <begin position="150"/>
        <end position="205"/>
    </location>
    <ligand>
        <name>ATP</name>
        <dbReference type="ChEBI" id="CHEBI:30616"/>
    </ligand>
</feature>
<feature type="binding site" evidence="2">
    <location>
        <position position="280"/>
    </location>
    <ligand>
        <name>Mg(2+)</name>
        <dbReference type="ChEBI" id="CHEBI:18420"/>
        <label>1</label>
    </ligand>
</feature>
<feature type="binding site" evidence="2">
    <location>
        <position position="293"/>
    </location>
    <ligand>
        <name>Mg(2+)</name>
        <dbReference type="ChEBI" id="CHEBI:18420"/>
        <label>1</label>
    </ligand>
</feature>
<feature type="binding site" evidence="2">
    <location>
        <position position="293"/>
    </location>
    <ligand>
        <name>Mg(2+)</name>
        <dbReference type="ChEBI" id="CHEBI:18420"/>
        <label>2</label>
    </ligand>
</feature>
<feature type="binding site" evidence="2">
    <location>
        <position position="295"/>
    </location>
    <ligand>
        <name>Mg(2+)</name>
        <dbReference type="ChEBI" id="CHEBI:18420"/>
        <label>2</label>
    </ligand>
</feature>
<keyword id="KW-0067">ATP-binding</keyword>
<keyword id="KW-0133">Cell shape</keyword>
<keyword id="KW-0961">Cell wall biogenesis/degradation</keyword>
<keyword id="KW-0963">Cytoplasm</keyword>
<keyword id="KW-0436">Ligase</keyword>
<keyword id="KW-0460">Magnesium</keyword>
<keyword id="KW-0464">Manganese</keyword>
<keyword id="KW-0479">Metal-binding</keyword>
<keyword id="KW-0547">Nucleotide-binding</keyword>
<keyword id="KW-0573">Peptidoglycan synthesis</keyword>
<organism>
    <name type="scientific">Vibrio campbellii (strain ATCC BAA-1116)</name>
    <dbReference type="NCBI Taxonomy" id="2902295"/>
    <lineage>
        <taxon>Bacteria</taxon>
        <taxon>Pseudomonadati</taxon>
        <taxon>Pseudomonadota</taxon>
        <taxon>Gammaproteobacteria</taxon>
        <taxon>Vibrionales</taxon>
        <taxon>Vibrionaceae</taxon>
        <taxon>Vibrio</taxon>
    </lineage>
</organism>